<protein>
    <recommendedName>
        <fullName evidence="6">Glutarate-semialdehyde dehydrogenase</fullName>
        <ecNumber evidence="5">1.2.1.-</ecNumber>
    </recommendedName>
</protein>
<keyword id="KW-0521">NADP</keyword>
<keyword id="KW-0560">Oxidoreductase</keyword>
<keyword id="KW-1185">Reference proteome</keyword>
<accession>Q9I6M5</accession>
<sequence>MQLKDAKLFRQQAYVDGAWVDADNGQTIKVNNPATGEIIGSVPKMGAAETRRAIEAADKALPAWRALTAKERANKLRRWFDLMIENQDDLARLMTIEQGKPLAEAKGEIAYAASFLEWFGEEAKRIYGDTIPGHQPDKRIIVIKQPIGVTAAITPWNFPSAMITRKAGPALAAGCTMVLKPASQTPYSALALAELAERAGIPKGVFSVVTGSAGEVGGELTSNPIVRKLTFTGSTEIGRQLMAECAQDIKKVSLELGGNAPFIVFDDADLDAAVEGALISKYRNNGQTCVCANRLYVQDGVYDAFVDKLKAAVAKLNIGNGLEAGVTTGPLIDAKAVAKVEEHIADAVSKGAKVVSGGKPHALGGTFFEPTILVDVPKNALVSKDETFGPLAPVFRFKDEAEVIAMSNDTEFGLASYFYARDLARVFRVAEQLEYGMVGINTGLISNEVAPFGGIKASGLGREGSKYGIEDYLEIKYLCLGGI</sequence>
<proteinExistence type="evidence at protein level"/>
<evidence type="ECO:0000250" key="1"/>
<evidence type="ECO:0000250" key="2">
    <source>
        <dbReference type="UniProtKB" id="Q88RC0"/>
    </source>
</evidence>
<evidence type="ECO:0000255" key="3">
    <source>
        <dbReference type="PROSITE-ProRule" id="PRU10007"/>
    </source>
</evidence>
<evidence type="ECO:0000255" key="4">
    <source>
        <dbReference type="PROSITE-ProRule" id="PRU10008"/>
    </source>
</evidence>
<evidence type="ECO:0000269" key="5">
    <source>
    </source>
</evidence>
<evidence type="ECO:0000303" key="6">
    <source>
    </source>
</evidence>
<evidence type="ECO:0000305" key="7"/>
<evidence type="ECO:0000305" key="8">
    <source>
    </source>
</evidence>
<comment type="function">
    <text evidence="5">Catalyzes the conversion of 5-oxopentanoate (glutarate semialdehyde) to glutarate. Involved in L-lysine degradation.</text>
</comment>
<comment type="catalytic activity">
    <reaction evidence="5">
        <text>5-oxopentanoate + NADP(+) + H2O = glutarate + NADPH + 2 H(+)</text>
        <dbReference type="Rhea" id="RHEA:57832"/>
        <dbReference type="ChEBI" id="CHEBI:15377"/>
        <dbReference type="ChEBI" id="CHEBI:15378"/>
        <dbReference type="ChEBI" id="CHEBI:16120"/>
        <dbReference type="ChEBI" id="CHEBI:30921"/>
        <dbReference type="ChEBI" id="CHEBI:57783"/>
        <dbReference type="ChEBI" id="CHEBI:58349"/>
    </reaction>
</comment>
<comment type="pathway">
    <text evidence="8">Amino-acid degradation.</text>
</comment>
<comment type="similarity">
    <text evidence="7">Belongs to the aldehyde dehydrogenase family.</text>
</comment>
<reference key="1">
    <citation type="journal article" date="2000" name="Nature">
        <title>Complete genome sequence of Pseudomonas aeruginosa PAO1, an opportunistic pathogen.</title>
        <authorList>
            <person name="Stover C.K."/>
            <person name="Pham X.-Q.T."/>
            <person name="Erwin A.L."/>
            <person name="Mizoguchi S.D."/>
            <person name="Warrener P."/>
            <person name="Hickey M.J."/>
            <person name="Brinkman F.S.L."/>
            <person name="Hufnagle W.O."/>
            <person name="Kowalik D.J."/>
            <person name="Lagrou M."/>
            <person name="Garber R.L."/>
            <person name="Goltry L."/>
            <person name="Tolentino E."/>
            <person name="Westbrock-Wadman S."/>
            <person name="Yuan Y."/>
            <person name="Brody L.L."/>
            <person name="Coulter S.N."/>
            <person name="Folger K.R."/>
            <person name="Kas A."/>
            <person name="Larbig K."/>
            <person name="Lim R.M."/>
            <person name="Smith K.A."/>
            <person name="Spencer D.H."/>
            <person name="Wong G.K.-S."/>
            <person name="Wu Z."/>
            <person name="Paulsen I.T."/>
            <person name="Reizer J."/>
            <person name="Saier M.H. Jr."/>
            <person name="Hancock R.E.W."/>
            <person name="Lory S."/>
            <person name="Olson M.V."/>
        </authorList>
    </citation>
    <scope>NUCLEOTIDE SEQUENCE [LARGE SCALE GENOMIC DNA]</scope>
    <source>
        <strain>ATCC 15692 / DSM 22644 / CIP 104116 / JCM 14847 / LMG 12228 / 1C / PRS 101 / PAO1</strain>
    </source>
</reference>
<reference key="2">
    <citation type="journal article" date="2007" name="FEBS J.">
        <title>Prediction of missing enzyme genes in a bacterial metabolic network. Reconstruction of the lysine-degradation pathway of Pseudomonas aeruginosa.</title>
        <authorList>
            <person name="Yamanishi Y."/>
            <person name="Mihara H."/>
            <person name="Osaki M."/>
            <person name="Muramatsu H."/>
            <person name="Esaki N."/>
            <person name="Sato T."/>
            <person name="Hizukuri Y."/>
            <person name="Goto S."/>
            <person name="Kanehisa M."/>
        </authorList>
    </citation>
    <scope>FUNCTION</scope>
    <scope>CATALYTIC ACTIVITY</scope>
    <scope>PATHWAY</scope>
    <source>
        <strain>ATCC 15692 / DSM 22644 / CIP 104116 / JCM 14847 / LMG 12228 / 1C / PRS 101 / PAO1</strain>
    </source>
</reference>
<gene>
    <name evidence="2" type="primary">davD</name>
    <name type="ordered locus">PA0265</name>
</gene>
<name>DAVD_PSEAE</name>
<dbReference type="EC" id="1.2.1.-" evidence="5"/>
<dbReference type="EMBL" id="AE004091">
    <property type="protein sequence ID" value="AAG03654.1"/>
    <property type="molecule type" value="Genomic_DNA"/>
</dbReference>
<dbReference type="PIR" id="D83613">
    <property type="entry name" value="D83613"/>
</dbReference>
<dbReference type="SMR" id="Q9I6M5"/>
<dbReference type="FunCoup" id="Q9I6M5">
    <property type="interactions" value="498"/>
</dbReference>
<dbReference type="STRING" id="208964.PA0265"/>
<dbReference type="PaxDb" id="208964-PA0265"/>
<dbReference type="KEGG" id="pae:PA0265"/>
<dbReference type="PATRIC" id="fig|208964.12.peg.276"/>
<dbReference type="PseudoCAP" id="PA0265"/>
<dbReference type="HOGENOM" id="CLU_005391_5_1_6"/>
<dbReference type="InParanoid" id="Q9I6M5"/>
<dbReference type="OrthoDB" id="9812625at2"/>
<dbReference type="PhylomeDB" id="Q9I6M5"/>
<dbReference type="BioCyc" id="MetaCyc:MONOMER-15075"/>
<dbReference type="BioCyc" id="PAER208964:G1FZ6-267-MONOMER"/>
<dbReference type="Proteomes" id="UP000002438">
    <property type="component" value="Chromosome"/>
</dbReference>
<dbReference type="GO" id="GO:0005829">
    <property type="term" value="C:cytosol"/>
    <property type="evidence" value="ECO:0000318"/>
    <property type="project" value="GO_Central"/>
</dbReference>
<dbReference type="GO" id="GO:0102810">
    <property type="term" value="F:glutarate-semialdehyde dehydrogenase (NADP+) activity"/>
    <property type="evidence" value="ECO:0000314"/>
    <property type="project" value="UniProtKB"/>
</dbReference>
<dbReference type="GO" id="GO:0004777">
    <property type="term" value="F:succinate-semialdehyde dehydrogenase (NAD+) activity"/>
    <property type="evidence" value="ECO:0000318"/>
    <property type="project" value="GO_Central"/>
</dbReference>
<dbReference type="GO" id="GO:0009450">
    <property type="term" value="P:gamma-aminobutyric acid catabolic process"/>
    <property type="evidence" value="ECO:0000318"/>
    <property type="project" value="GO_Central"/>
</dbReference>
<dbReference type="GO" id="GO:0019477">
    <property type="term" value="P:L-lysine catabolic process"/>
    <property type="evidence" value="ECO:0000314"/>
    <property type="project" value="UniProtKB"/>
</dbReference>
<dbReference type="CDD" id="cd07103">
    <property type="entry name" value="ALDH_F5_SSADH_GabD"/>
    <property type="match status" value="1"/>
</dbReference>
<dbReference type="FunFam" id="3.40.309.10:FF:000004">
    <property type="entry name" value="Succinate-semialdehyde dehydrogenase I"/>
    <property type="match status" value="1"/>
</dbReference>
<dbReference type="FunFam" id="3.40.605.10:FF:000005">
    <property type="entry name" value="Succinate-semialdehyde dehydrogenase I"/>
    <property type="match status" value="1"/>
</dbReference>
<dbReference type="Gene3D" id="3.40.605.10">
    <property type="entry name" value="Aldehyde Dehydrogenase, Chain A, domain 1"/>
    <property type="match status" value="1"/>
</dbReference>
<dbReference type="Gene3D" id="3.40.309.10">
    <property type="entry name" value="Aldehyde Dehydrogenase, Chain A, domain 2"/>
    <property type="match status" value="1"/>
</dbReference>
<dbReference type="InterPro" id="IPR016161">
    <property type="entry name" value="Ald_DH/histidinol_DH"/>
</dbReference>
<dbReference type="InterPro" id="IPR016163">
    <property type="entry name" value="Ald_DH_C"/>
</dbReference>
<dbReference type="InterPro" id="IPR016160">
    <property type="entry name" value="Ald_DH_CS_CYS"/>
</dbReference>
<dbReference type="InterPro" id="IPR029510">
    <property type="entry name" value="Ald_DH_CS_GLU"/>
</dbReference>
<dbReference type="InterPro" id="IPR016162">
    <property type="entry name" value="Ald_DH_N"/>
</dbReference>
<dbReference type="InterPro" id="IPR015590">
    <property type="entry name" value="Aldehyde_DH_dom"/>
</dbReference>
<dbReference type="InterPro" id="IPR050740">
    <property type="entry name" value="Aldehyde_DH_Superfamily"/>
</dbReference>
<dbReference type="InterPro" id="IPR010102">
    <property type="entry name" value="Succ_semiAld_DH"/>
</dbReference>
<dbReference type="NCBIfam" id="NF008415">
    <property type="entry name" value="PRK11241.1"/>
    <property type="match status" value="1"/>
</dbReference>
<dbReference type="NCBIfam" id="TIGR01780">
    <property type="entry name" value="SSADH"/>
    <property type="match status" value="1"/>
</dbReference>
<dbReference type="PANTHER" id="PTHR43353">
    <property type="entry name" value="SUCCINATE-SEMIALDEHYDE DEHYDROGENASE, MITOCHONDRIAL"/>
    <property type="match status" value="1"/>
</dbReference>
<dbReference type="PANTHER" id="PTHR43353:SF5">
    <property type="entry name" value="SUCCINATE-SEMIALDEHYDE DEHYDROGENASE, MITOCHONDRIAL"/>
    <property type="match status" value="1"/>
</dbReference>
<dbReference type="Pfam" id="PF00171">
    <property type="entry name" value="Aldedh"/>
    <property type="match status" value="1"/>
</dbReference>
<dbReference type="SUPFAM" id="SSF53720">
    <property type="entry name" value="ALDH-like"/>
    <property type="match status" value="1"/>
</dbReference>
<dbReference type="PROSITE" id="PS00070">
    <property type="entry name" value="ALDEHYDE_DEHYDR_CYS"/>
    <property type="match status" value="1"/>
</dbReference>
<dbReference type="PROSITE" id="PS00687">
    <property type="entry name" value="ALDEHYDE_DEHYDR_GLU"/>
    <property type="match status" value="1"/>
</dbReference>
<feature type="chain" id="PRO_0000418392" description="Glutarate-semialdehyde dehydrogenase">
    <location>
        <begin position="1"/>
        <end position="483"/>
    </location>
</feature>
<feature type="active site" description="Proton acceptor" evidence="3 4">
    <location>
        <position position="255"/>
    </location>
</feature>
<feature type="active site" description="Nucleophile" evidence="3 4">
    <location>
        <position position="289"/>
    </location>
</feature>
<feature type="binding site" evidence="1">
    <location>
        <begin position="156"/>
        <end position="157"/>
    </location>
    <ligand>
        <name>NADP(+)</name>
        <dbReference type="ChEBI" id="CHEBI:58349"/>
    </ligand>
</feature>
<feature type="binding site" evidence="1">
    <location>
        <begin position="180"/>
        <end position="183"/>
    </location>
    <ligand>
        <name>NADP(+)</name>
        <dbReference type="ChEBI" id="CHEBI:58349"/>
    </ligand>
</feature>
<feature type="binding site" evidence="1">
    <location>
        <begin position="233"/>
        <end position="234"/>
    </location>
    <ligand>
        <name>NADP(+)</name>
        <dbReference type="ChEBI" id="CHEBI:58349"/>
    </ligand>
</feature>
<feature type="binding site" evidence="1">
    <location>
        <position position="256"/>
    </location>
    <ligand>
        <name>NADP(+)</name>
        <dbReference type="ChEBI" id="CHEBI:58349"/>
    </ligand>
</feature>
<feature type="binding site" evidence="1">
    <location>
        <position position="386"/>
    </location>
    <ligand>
        <name>NADP(+)</name>
        <dbReference type="ChEBI" id="CHEBI:58349"/>
    </ligand>
</feature>
<organism>
    <name type="scientific">Pseudomonas aeruginosa (strain ATCC 15692 / DSM 22644 / CIP 104116 / JCM 14847 / LMG 12228 / 1C / PRS 101 / PAO1)</name>
    <dbReference type="NCBI Taxonomy" id="208964"/>
    <lineage>
        <taxon>Bacteria</taxon>
        <taxon>Pseudomonadati</taxon>
        <taxon>Pseudomonadota</taxon>
        <taxon>Gammaproteobacteria</taxon>
        <taxon>Pseudomonadales</taxon>
        <taxon>Pseudomonadaceae</taxon>
        <taxon>Pseudomonas</taxon>
    </lineage>
</organism>